<feature type="chain" id="PRO_1000064710" description="Ribosome maturation factor RimP">
    <location>
        <begin position="1"/>
        <end position="155"/>
    </location>
</feature>
<comment type="function">
    <text evidence="1">Required for maturation of 30S ribosomal subunits.</text>
</comment>
<comment type="subcellular location">
    <subcellularLocation>
        <location evidence="1">Cytoplasm</location>
    </subcellularLocation>
</comment>
<comment type="similarity">
    <text evidence="1">Belongs to the RimP family.</text>
</comment>
<organism>
    <name type="scientific">Dichelobacter nodosus (strain VCS1703A)</name>
    <dbReference type="NCBI Taxonomy" id="246195"/>
    <lineage>
        <taxon>Bacteria</taxon>
        <taxon>Pseudomonadati</taxon>
        <taxon>Pseudomonadota</taxon>
        <taxon>Gammaproteobacteria</taxon>
        <taxon>Cardiobacteriales</taxon>
        <taxon>Cardiobacteriaceae</taxon>
        <taxon>Dichelobacter</taxon>
    </lineage>
</organism>
<sequence length="155" mass="17586">MSQEQVVTELLRPIVESMGFIWWGLEYHYNSMNSILRIYVDTQEGGIGIDDIVTITEQLNPILDVEQPITTNYTLEVSSPGLDRILFTLAQCEQFIGATVHCRLRFPFEGKRKFQGIMTAVDHDKETISLTLADGAAEVHLPFTQIDKARIVPQF</sequence>
<keyword id="KW-0963">Cytoplasm</keyword>
<keyword id="KW-1185">Reference proteome</keyword>
<keyword id="KW-0690">Ribosome biogenesis</keyword>
<protein>
    <recommendedName>
        <fullName evidence="1">Ribosome maturation factor RimP</fullName>
    </recommendedName>
</protein>
<proteinExistence type="inferred from homology"/>
<reference key="1">
    <citation type="journal article" date="2007" name="Nat. Biotechnol.">
        <title>Genome sequence and identification of candidate vaccine antigens from the animal pathogen Dichelobacter nodosus.</title>
        <authorList>
            <person name="Myers G.S.A."/>
            <person name="Parker D."/>
            <person name="Al-Hasani K."/>
            <person name="Kennan R.M."/>
            <person name="Seemann T."/>
            <person name="Ren Q."/>
            <person name="Badger J.H."/>
            <person name="Selengut J.D."/>
            <person name="Deboy R.T."/>
            <person name="Tettelin H."/>
            <person name="Boyce J.D."/>
            <person name="McCarl V.P."/>
            <person name="Han X."/>
            <person name="Nelson W.C."/>
            <person name="Madupu R."/>
            <person name="Mohamoud Y."/>
            <person name="Holley T."/>
            <person name="Fedorova N."/>
            <person name="Khouri H."/>
            <person name="Bottomley S.P."/>
            <person name="Whittington R.J."/>
            <person name="Adler B."/>
            <person name="Songer J.G."/>
            <person name="Rood J.I."/>
            <person name="Paulsen I.T."/>
        </authorList>
    </citation>
    <scope>NUCLEOTIDE SEQUENCE [LARGE SCALE GENOMIC DNA]</scope>
    <source>
        <strain>VCS1703A</strain>
    </source>
</reference>
<dbReference type="EMBL" id="CP000513">
    <property type="protein sequence ID" value="ABQ13958.1"/>
    <property type="molecule type" value="Genomic_DNA"/>
</dbReference>
<dbReference type="RefSeq" id="WP_011927790.1">
    <property type="nucleotide sequence ID" value="NC_009446.1"/>
</dbReference>
<dbReference type="SMR" id="A5EWZ1"/>
<dbReference type="STRING" id="246195.DNO_0031"/>
<dbReference type="KEGG" id="dno:DNO_0031"/>
<dbReference type="eggNOG" id="COG0779">
    <property type="taxonomic scope" value="Bacteria"/>
</dbReference>
<dbReference type="HOGENOM" id="CLU_070525_1_1_6"/>
<dbReference type="OrthoDB" id="9805006at2"/>
<dbReference type="Proteomes" id="UP000000248">
    <property type="component" value="Chromosome"/>
</dbReference>
<dbReference type="GO" id="GO:0005829">
    <property type="term" value="C:cytosol"/>
    <property type="evidence" value="ECO:0007669"/>
    <property type="project" value="TreeGrafter"/>
</dbReference>
<dbReference type="GO" id="GO:0000028">
    <property type="term" value="P:ribosomal small subunit assembly"/>
    <property type="evidence" value="ECO:0007669"/>
    <property type="project" value="TreeGrafter"/>
</dbReference>
<dbReference type="GO" id="GO:0006412">
    <property type="term" value="P:translation"/>
    <property type="evidence" value="ECO:0007669"/>
    <property type="project" value="TreeGrafter"/>
</dbReference>
<dbReference type="CDD" id="cd01734">
    <property type="entry name" value="YlxS_C"/>
    <property type="match status" value="1"/>
</dbReference>
<dbReference type="FunFam" id="3.30.300.70:FF:000001">
    <property type="entry name" value="Ribosome maturation factor RimP"/>
    <property type="match status" value="1"/>
</dbReference>
<dbReference type="Gene3D" id="2.30.30.180">
    <property type="entry name" value="Ribosome maturation factor RimP, C-terminal domain"/>
    <property type="match status" value="1"/>
</dbReference>
<dbReference type="Gene3D" id="3.30.300.70">
    <property type="entry name" value="RimP-like superfamily, N-terminal"/>
    <property type="match status" value="1"/>
</dbReference>
<dbReference type="HAMAP" id="MF_01077">
    <property type="entry name" value="RimP"/>
    <property type="match status" value="1"/>
</dbReference>
<dbReference type="InterPro" id="IPR003728">
    <property type="entry name" value="Ribosome_maturation_RimP"/>
</dbReference>
<dbReference type="InterPro" id="IPR028998">
    <property type="entry name" value="RimP_C"/>
</dbReference>
<dbReference type="InterPro" id="IPR036847">
    <property type="entry name" value="RimP_C_sf"/>
</dbReference>
<dbReference type="InterPro" id="IPR028989">
    <property type="entry name" value="RimP_N"/>
</dbReference>
<dbReference type="InterPro" id="IPR035956">
    <property type="entry name" value="RimP_N_sf"/>
</dbReference>
<dbReference type="PANTHER" id="PTHR33867">
    <property type="entry name" value="RIBOSOME MATURATION FACTOR RIMP"/>
    <property type="match status" value="1"/>
</dbReference>
<dbReference type="PANTHER" id="PTHR33867:SF1">
    <property type="entry name" value="RIBOSOME MATURATION FACTOR RIMP"/>
    <property type="match status" value="1"/>
</dbReference>
<dbReference type="Pfam" id="PF17384">
    <property type="entry name" value="DUF150_C"/>
    <property type="match status" value="1"/>
</dbReference>
<dbReference type="Pfam" id="PF02576">
    <property type="entry name" value="RimP_N"/>
    <property type="match status" value="1"/>
</dbReference>
<dbReference type="SUPFAM" id="SSF74942">
    <property type="entry name" value="YhbC-like, C-terminal domain"/>
    <property type="match status" value="1"/>
</dbReference>
<dbReference type="SUPFAM" id="SSF75420">
    <property type="entry name" value="YhbC-like, N-terminal domain"/>
    <property type="match status" value="1"/>
</dbReference>
<evidence type="ECO:0000255" key="1">
    <source>
        <dbReference type="HAMAP-Rule" id="MF_01077"/>
    </source>
</evidence>
<name>RIMP_DICNV</name>
<gene>
    <name evidence="1" type="primary">rimP</name>
    <name type="ordered locus">DNO_0031</name>
</gene>
<accession>A5EWZ1</accession>